<protein>
    <recommendedName>
        <fullName evidence="4">Kojibiose hydrolase</fullName>
        <ecNumber evidence="3">3.2.1.216</ecNumber>
    </recommendedName>
    <alternativeName>
        <fullName evidence="4">Kojibiase</fullName>
    </alternativeName>
    <alternativeName>
        <fullName evidence="4">Kojibiose glucohydrolase</fullName>
    </alternativeName>
</protein>
<dbReference type="EC" id="3.2.1.216" evidence="3"/>
<dbReference type="EMBL" id="LT629740">
    <property type="protein sequence ID" value="SDT07729.1"/>
    <property type="molecule type" value="Genomic_DNA"/>
</dbReference>
<dbReference type="RefSeq" id="WP_091372880.1">
    <property type="nucleotide sequence ID" value="NZ_LT629740.1"/>
</dbReference>
<dbReference type="SMR" id="A0A1H1XG33"/>
<dbReference type="STRING" id="652787.SAMN05216490_2434"/>
<dbReference type="OrthoDB" id="9758855at2"/>
<dbReference type="BioCyc" id="MetaCyc:MONOMER-21813"/>
<dbReference type="Proteomes" id="UP000199679">
    <property type="component" value="Chromosome I"/>
</dbReference>
<dbReference type="GO" id="GO:0030246">
    <property type="term" value="F:carbohydrate binding"/>
    <property type="evidence" value="ECO:0007669"/>
    <property type="project" value="InterPro"/>
</dbReference>
<dbReference type="GO" id="GO:0016757">
    <property type="term" value="F:glycosyltransferase activity"/>
    <property type="evidence" value="ECO:0007669"/>
    <property type="project" value="UniProtKB-ARBA"/>
</dbReference>
<dbReference type="GO" id="GO:0004553">
    <property type="term" value="F:hydrolase activity, hydrolyzing O-glycosyl compounds"/>
    <property type="evidence" value="ECO:0007669"/>
    <property type="project" value="TreeGrafter"/>
</dbReference>
<dbReference type="GO" id="GO:0005975">
    <property type="term" value="P:carbohydrate metabolic process"/>
    <property type="evidence" value="ECO:0007669"/>
    <property type="project" value="InterPro"/>
</dbReference>
<dbReference type="Gene3D" id="1.50.10.10">
    <property type="match status" value="1"/>
</dbReference>
<dbReference type="Gene3D" id="2.70.98.40">
    <property type="entry name" value="Glycoside hydrolase, family 65, N-terminal domain"/>
    <property type="match status" value="1"/>
</dbReference>
<dbReference type="InterPro" id="IPR008928">
    <property type="entry name" value="6-hairpin_glycosidase_sf"/>
</dbReference>
<dbReference type="InterPro" id="IPR012341">
    <property type="entry name" value="6hp_glycosidase-like_sf"/>
</dbReference>
<dbReference type="InterPro" id="IPR011013">
    <property type="entry name" value="Gal_mutarotase_sf_dom"/>
</dbReference>
<dbReference type="InterPro" id="IPR005195">
    <property type="entry name" value="Glyco_hydro_65_M"/>
</dbReference>
<dbReference type="InterPro" id="IPR005196">
    <property type="entry name" value="Glyco_hydro_65_N"/>
</dbReference>
<dbReference type="InterPro" id="IPR037018">
    <property type="entry name" value="Glyco_hydro_65_N_sf"/>
</dbReference>
<dbReference type="PANTHER" id="PTHR11051">
    <property type="entry name" value="GLYCOSYL HYDROLASE-RELATED"/>
    <property type="match status" value="1"/>
</dbReference>
<dbReference type="PANTHER" id="PTHR11051:SF8">
    <property type="entry name" value="PROTEIN-GLUCOSYLGALACTOSYLHYDROXYLYSINE GLUCOSIDASE"/>
    <property type="match status" value="1"/>
</dbReference>
<dbReference type="Pfam" id="PF03632">
    <property type="entry name" value="Glyco_hydro_65m"/>
    <property type="match status" value="1"/>
</dbReference>
<dbReference type="Pfam" id="PF03636">
    <property type="entry name" value="Glyco_hydro_65N"/>
    <property type="match status" value="1"/>
</dbReference>
<dbReference type="SUPFAM" id="SSF74650">
    <property type="entry name" value="Galactose mutarotase-like"/>
    <property type="match status" value="1"/>
</dbReference>
<dbReference type="SUPFAM" id="SSF48208">
    <property type="entry name" value="Six-hairpin glycosidases"/>
    <property type="match status" value="1"/>
</dbReference>
<comment type="function">
    <text evidence="3">Glycosidase that specifically hydrolyzes kojibiose to beta-glucose and glucose (PubMed:34684901). Besides its activity on kojibiose, is also able to act on alpha-1,2-oligoglucans with a higher degree of polymerization (PubMed:34684901). Shows weak activity on nigerose, but is not capable of breaking down trehalose, maltose, isomaltose, sucrose, isomaltulose, turanose or melezitose (PubMed:34684901).</text>
</comment>
<comment type="catalytic activity">
    <reaction evidence="3">
        <text>kojibiose + H2O = beta-D-glucose + D-glucose</text>
        <dbReference type="Rhea" id="RHEA:69611"/>
        <dbReference type="ChEBI" id="CHEBI:4167"/>
        <dbReference type="ChEBI" id="CHEBI:15377"/>
        <dbReference type="ChEBI" id="CHEBI:15903"/>
        <dbReference type="ChEBI" id="CHEBI:142460"/>
        <dbReference type="EC" id="3.2.1.216"/>
    </reaction>
</comment>
<comment type="biophysicochemical properties">
    <kinetics>
        <KM evidence="3">0.77 mM for kojibiose (at pH 4.5 and 30 degrees Celsius)</KM>
        <text evidence="3">kcat is 9.9 sec(-1) with kojibiose as substrate (at pH 4.5 and 30 degrees Celsius).</text>
    </kinetics>
    <phDependence>
        <text evidence="3">Optimum pH is 4-5.5.</text>
    </phDependence>
    <temperatureDependence>
        <text evidence="3">Optimum temperature is 30 degrees Celsius.</text>
    </temperatureDependence>
</comment>
<comment type="similarity">
    <text evidence="5">Belongs to the glycosyl hydrolase 65 family.</text>
</comment>
<sequence>MNKGIIQLLALSLFCISVKAQDPWIIKADKIDPANYYGVTVANGMIGIVSSSEPFQVKNVVLAGAYDMYGRGRVSNFLNSFNLLNMYLLFNGDDWDASKVKNMKQELDMQHASFTTTFDYGDVASIKYTYYSLRQLPFCVLMDVSVTAKKTVNITAASVMQTPDALRDVQNYYNEVDGPTGRISLLTSTAKSPTGKLQLCASNAFIFNEADSLAPRLMHEMLDNNMHSMRFSKELAAGQTYSYSVVGSSITSAHTTDPLNEAERLTIFARLQGRDGLIKAHTKAWAELWKSDIQIDGEPQAQQDVHSMLYHLYSFSREGTAYAPSPMGLSGSGYNGHIFWDSDLWMFPALLVLHPEIAKSLIEYRYERLAAAKQNAFAHSFKGAMYPWESADNGTEETPVGSLSGPFEHHITACVALAAWNYYCVTQDKQWLQEKGWPIISACADFWASRVERNGPGQYDIKNVIAADEWAEGIDNDAFTNAAAKANLQCAALAAKVLNVKADPDWQLVAQNIPILKFPDGVTKEFASYKGGGIKQADVNLLAYPLKTITDPAQVKKDLEFYESRIPNEGTPAMTQAIFTLLYSRLGNGDKAYHFFKDAYEPNLNPPFRVIAETKGGTNPYFATGAGGIIQSLLMGFGGLDITPNGITQVKSTLPSNWKSITITGVGPEKKTYVVK</sequence>
<accession>A0A1H1XG33</accession>
<gene>
    <name evidence="6" type="ORF">SAMN05216490_2434</name>
</gene>
<keyword id="KW-0119">Carbohydrate metabolism</keyword>
<keyword id="KW-0326">Glycosidase</keyword>
<keyword id="KW-0378">Hydrolase</keyword>
<keyword id="KW-1185">Reference proteome</keyword>
<keyword id="KW-0732">Signal</keyword>
<name>KJASE_MUCMA</name>
<feature type="signal peptide" evidence="2">
    <location>
        <begin position="1"/>
        <end position="20"/>
    </location>
</feature>
<feature type="chain" id="PRO_5009265497" description="Kojibiose hydrolase">
    <location>
        <begin position="21"/>
        <end position="676"/>
    </location>
</feature>
<feature type="active site" description="Proton donor" evidence="1">
    <location>
        <position position="469"/>
    </location>
</feature>
<feature type="active site" description="Proton acceptor" evidence="1">
    <location>
        <position position="613"/>
    </location>
</feature>
<organism>
    <name type="scientific">Mucilaginibacter mallensis</name>
    <dbReference type="NCBI Taxonomy" id="652787"/>
    <lineage>
        <taxon>Bacteria</taxon>
        <taxon>Pseudomonadati</taxon>
        <taxon>Bacteroidota</taxon>
        <taxon>Sphingobacteriia</taxon>
        <taxon>Sphingobacteriales</taxon>
        <taxon>Sphingobacteriaceae</taxon>
        <taxon>Mucilaginibacter</taxon>
    </lineage>
</organism>
<reference key="1">
    <citation type="submission" date="2016-10" db="EMBL/GenBank/DDBJ databases">
        <authorList>
            <person name="Varghese N."/>
        </authorList>
    </citation>
    <scope>NUCLEOTIDE SEQUENCE [LARGE SCALE GENOMIC DNA]</scope>
    <source>
        <strain>ATCC BAA-1856 / LMG 25360 / MP1X4</strain>
    </source>
</reference>
<reference key="2">
    <citation type="journal article" date="2021" name="Molecules">
        <title>Discovery of a Kojibiose Hydrolase by Analysis of Specificity-Determining Correlated Positions in Glycoside Hydrolase Family 65.</title>
        <authorList>
            <person name="De Beul E."/>
            <person name="Jongbloet A."/>
            <person name="Franceus J."/>
            <person name="Desmet T."/>
        </authorList>
    </citation>
    <scope>FUNCTION</scope>
    <scope>CATALYTIC ACTIVITY</scope>
    <scope>BIOPHYSICOCHEMICAL PROPERTIES</scope>
</reference>
<evidence type="ECO:0000250" key="1">
    <source>
        <dbReference type="UniProtKB" id="A5FBJ5"/>
    </source>
</evidence>
<evidence type="ECO:0000255" key="2"/>
<evidence type="ECO:0000269" key="3">
    <source>
    </source>
</evidence>
<evidence type="ECO:0000303" key="4">
    <source>
    </source>
</evidence>
<evidence type="ECO:0000305" key="5"/>
<evidence type="ECO:0000312" key="6">
    <source>
        <dbReference type="EMBL" id="SDT07729.1"/>
    </source>
</evidence>
<proteinExistence type="evidence at protein level"/>